<reference key="1">
    <citation type="journal article" date="2003" name="Nature">
        <title>Genome sequence of Bacillus cereus and comparative analysis with Bacillus anthracis.</title>
        <authorList>
            <person name="Ivanova N."/>
            <person name="Sorokin A."/>
            <person name="Anderson I."/>
            <person name="Galleron N."/>
            <person name="Candelon B."/>
            <person name="Kapatral V."/>
            <person name="Bhattacharyya A."/>
            <person name="Reznik G."/>
            <person name="Mikhailova N."/>
            <person name="Lapidus A."/>
            <person name="Chu L."/>
            <person name="Mazur M."/>
            <person name="Goltsman E."/>
            <person name="Larsen N."/>
            <person name="D'Souza M."/>
            <person name="Walunas T."/>
            <person name="Grechkin Y."/>
            <person name="Pusch G."/>
            <person name="Haselkorn R."/>
            <person name="Fonstein M."/>
            <person name="Ehrlich S.D."/>
            <person name="Overbeek R."/>
            <person name="Kyrpides N.C."/>
        </authorList>
    </citation>
    <scope>NUCLEOTIDE SEQUENCE [LARGE SCALE GENOMIC DNA]</scope>
    <source>
        <strain>ATCC 14579 / DSM 31 / CCUG 7414 / JCM 2152 / NBRC 15305 / NCIMB 9373 / NCTC 2599 / NRRL B-3711</strain>
    </source>
</reference>
<keyword id="KW-0963">Cytoplasm</keyword>
<keyword id="KW-0275">Fatty acid biosynthesis</keyword>
<keyword id="KW-0276">Fatty acid metabolism</keyword>
<keyword id="KW-0444">Lipid biosynthesis</keyword>
<keyword id="KW-0443">Lipid metabolism</keyword>
<keyword id="KW-0596">Phosphopantetheine</keyword>
<keyword id="KW-0597">Phosphoprotein</keyword>
<keyword id="KW-1185">Reference proteome</keyword>
<sequence>MADVLERVTKIIVDRLGVEETEVVPAASFKEDLGADSLDVVELVMQLEDEFEMEISDEDAEKIATVGDAVTYIESHL</sequence>
<comment type="function">
    <text evidence="1">Carrier of the growing fatty acid chain in fatty acid biosynthesis.</text>
</comment>
<comment type="pathway">
    <text evidence="1">Lipid metabolism; fatty acid biosynthesis.</text>
</comment>
<comment type="subcellular location">
    <subcellularLocation>
        <location evidence="1">Cytoplasm</location>
    </subcellularLocation>
</comment>
<comment type="PTM">
    <text evidence="1">4'-phosphopantetheine is transferred from CoA to a specific serine of apo-ACP by AcpS. This modification is essential for activity because fatty acids are bound in thioester linkage to the sulfhydryl of the prosthetic group.</text>
</comment>
<comment type="similarity">
    <text evidence="1">Belongs to the acyl carrier protein (ACP) family.</text>
</comment>
<comment type="sequence caution" evidence="3">
    <conflict type="erroneous initiation">
        <sequence resource="EMBL-CDS" id="AAP10770"/>
    </conflict>
</comment>
<gene>
    <name evidence="1" type="primary">acpP</name>
    <name type="ordered locus">BC_3848</name>
</gene>
<dbReference type="EMBL" id="AE016877">
    <property type="protein sequence ID" value="AAP10770.1"/>
    <property type="status" value="ALT_INIT"/>
    <property type="molecule type" value="Genomic_DNA"/>
</dbReference>
<dbReference type="RefSeq" id="NP_833569.1">
    <property type="nucleotide sequence ID" value="NC_004722.1"/>
</dbReference>
<dbReference type="RefSeq" id="WP_000786062.1">
    <property type="nucleotide sequence ID" value="NZ_CP138336.1"/>
</dbReference>
<dbReference type="SMR" id="Q819V7"/>
<dbReference type="STRING" id="226900.BC_3848"/>
<dbReference type="GeneID" id="93007262"/>
<dbReference type="KEGG" id="bce:BC3848"/>
<dbReference type="PATRIC" id="fig|226900.8.peg.3967"/>
<dbReference type="HOGENOM" id="CLU_108696_5_3_9"/>
<dbReference type="OrthoDB" id="9804551at2"/>
<dbReference type="UniPathway" id="UPA00094"/>
<dbReference type="Proteomes" id="UP000001417">
    <property type="component" value="Chromosome"/>
</dbReference>
<dbReference type="GO" id="GO:0005829">
    <property type="term" value="C:cytosol"/>
    <property type="evidence" value="ECO:0000318"/>
    <property type="project" value="GO_Central"/>
</dbReference>
<dbReference type="GO" id="GO:0016020">
    <property type="term" value="C:membrane"/>
    <property type="evidence" value="ECO:0007669"/>
    <property type="project" value="GOC"/>
</dbReference>
<dbReference type="GO" id="GO:0000035">
    <property type="term" value="F:acyl binding"/>
    <property type="evidence" value="ECO:0000318"/>
    <property type="project" value="GO_Central"/>
</dbReference>
<dbReference type="GO" id="GO:0000036">
    <property type="term" value="F:acyl carrier activity"/>
    <property type="evidence" value="ECO:0000318"/>
    <property type="project" value="GO_Central"/>
</dbReference>
<dbReference type="GO" id="GO:0009245">
    <property type="term" value="P:lipid A biosynthetic process"/>
    <property type="evidence" value="ECO:0000318"/>
    <property type="project" value="GO_Central"/>
</dbReference>
<dbReference type="FunFam" id="1.10.1200.10:FF:000001">
    <property type="entry name" value="Acyl carrier protein"/>
    <property type="match status" value="1"/>
</dbReference>
<dbReference type="Gene3D" id="1.10.1200.10">
    <property type="entry name" value="ACP-like"/>
    <property type="match status" value="1"/>
</dbReference>
<dbReference type="HAMAP" id="MF_01217">
    <property type="entry name" value="Acyl_carrier"/>
    <property type="match status" value="1"/>
</dbReference>
<dbReference type="InterPro" id="IPR003231">
    <property type="entry name" value="ACP"/>
</dbReference>
<dbReference type="InterPro" id="IPR036736">
    <property type="entry name" value="ACP-like_sf"/>
</dbReference>
<dbReference type="InterPro" id="IPR009081">
    <property type="entry name" value="PP-bd_ACP"/>
</dbReference>
<dbReference type="InterPro" id="IPR006162">
    <property type="entry name" value="Ppantetheine_attach_site"/>
</dbReference>
<dbReference type="NCBIfam" id="TIGR00517">
    <property type="entry name" value="acyl_carrier"/>
    <property type="match status" value="1"/>
</dbReference>
<dbReference type="NCBIfam" id="NF002148">
    <property type="entry name" value="PRK00982.1-2"/>
    <property type="match status" value="1"/>
</dbReference>
<dbReference type="NCBIfam" id="NF002149">
    <property type="entry name" value="PRK00982.1-3"/>
    <property type="match status" value="1"/>
</dbReference>
<dbReference type="NCBIfam" id="NF002150">
    <property type="entry name" value="PRK00982.1-4"/>
    <property type="match status" value="1"/>
</dbReference>
<dbReference type="NCBIfam" id="NF002151">
    <property type="entry name" value="PRK00982.1-5"/>
    <property type="match status" value="1"/>
</dbReference>
<dbReference type="PANTHER" id="PTHR20863">
    <property type="entry name" value="ACYL CARRIER PROTEIN"/>
    <property type="match status" value="1"/>
</dbReference>
<dbReference type="PANTHER" id="PTHR20863:SF76">
    <property type="entry name" value="CARRIER DOMAIN-CONTAINING PROTEIN"/>
    <property type="match status" value="1"/>
</dbReference>
<dbReference type="Pfam" id="PF00550">
    <property type="entry name" value="PP-binding"/>
    <property type="match status" value="1"/>
</dbReference>
<dbReference type="SUPFAM" id="SSF47336">
    <property type="entry name" value="ACP-like"/>
    <property type="match status" value="1"/>
</dbReference>
<dbReference type="PROSITE" id="PS50075">
    <property type="entry name" value="CARRIER"/>
    <property type="match status" value="1"/>
</dbReference>
<dbReference type="PROSITE" id="PS00012">
    <property type="entry name" value="PHOSPHOPANTETHEINE"/>
    <property type="match status" value="1"/>
</dbReference>
<proteinExistence type="inferred from homology"/>
<name>ACP_BACCR</name>
<evidence type="ECO:0000255" key="1">
    <source>
        <dbReference type="HAMAP-Rule" id="MF_01217"/>
    </source>
</evidence>
<evidence type="ECO:0000255" key="2">
    <source>
        <dbReference type="PROSITE-ProRule" id="PRU00258"/>
    </source>
</evidence>
<evidence type="ECO:0000305" key="3"/>
<feature type="chain" id="PRO_0000180098" description="Acyl carrier protein">
    <location>
        <begin position="1"/>
        <end position="77"/>
    </location>
</feature>
<feature type="domain" description="Carrier" evidence="2">
    <location>
        <begin position="2"/>
        <end position="77"/>
    </location>
</feature>
<feature type="modified residue" description="O-(pantetheine 4'-phosphoryl)serine" evidence="2">
    <location>
        <position position="37"/>
    </location>
</feature>
<protein>
    <recommendedName>
        <fullName evidence="1">Acyl carrier protein</fullName>
        <shortName evidence="1">ACP</shortName>
    </recommendedName>
</protein>
<accession>Q819V7</accession>
<organism>
    <name type="scientific">Bacillus cereus (strain ATCC 14579 / DSM 31 / CCUG 7414 / JCM 2152 / NBRC 15305 / NCIMB 9373 / NCTC 2599 / NRRL B-3711)</name>
    <dbReference type="NCBI Taxonomy" id="226900"/>
    <lineage>
        <taxon>Bacteria</taxon>
        <taxon>Bacillati</taxon>
        <taxon>Bacillota</taxon>
        <taxon>Bacilli</taxon>
        <taxon>Bacillales</taxon>
        <taxon>Bacillaceae</taxon>
        <taxon>Bacillus</taxon>
        <taxon>Bacillus cereus group</taxon>
    </lineage>
</organism>